<gene>
    <name evidence="1" type="primary">frr</name>
    <name type="ordered locus">SSA_1619</name>
</gene>
<proteinExistence type="inferred from homology"/>
<comment type="function">
    <text evidence="1">Responsible for the release of ribosomes from messenger RNA at the termination of protein biosynthesis. May increase the efficiency of translation by recycling ribosomes from one round of translation to another.</text>
</comment>
<comment type="subcellular location">
    <subcellularLocation>
        <location evidence="1">Cytoplasm</location>
    </subcellularLocation>
</comment>
<comment type="similarity">
    <text evidence="1">Belongs to the RRF family.</text>
</comment>
<dbReference type="EMBL" id="CP000387">
    <property type="protein sequence ID" value="ABN45007.1"/>
    <property type="molecule type" value="Genomic_DNA"/>
</dbReference>
<dbReference type="RefSeq" id="WP_002894858.1">
    <property type="nucleotide sequence ID" value="NZ_CAXTYR010000001.1"/>
</dbReference>
<dbReference type="RefSeq" id="YP_001035557.1">
    <property type="nucleotide sequence ID" value="NC_009009.1"/>
</dbReference>
<dbReference type="SMR" id="A3CPA2"/>
<dbReference type="STRING" id="388919.SSA_1619"/>
<dbReference type="GeneID" id="48425985"/>
<dbReference type="KEGG" id="ssa:SSA_1619"/>
<dbReference type="PATRIC" id="fig|388919.9.peg.1537"/>
<dbReference type="eggNOG" id="COG0233">
    <property type="taxonomic scope" value="Bacteria"/>
</dbReference>
<dbReference type="HOGENOM" id="CLU_073981_2_0_9"/>
<dbReference type="OrthoDB" id="9804006at2"/>
<dbReference type="Proteomes" id="UP000002148">
    <property type="component" value="Chromosome"/>
</dbReference>
<dbReference type="GO" id="GO:0005737">
    <property type="term" value="C:cytoplasm"/>
    <property type="evidence" value="ECO:0007669"/>
    <property type="project" value="UniProtKB-SubCell"/>
</dbReference>
<dbReference type="GO" id="GO:0043023">
    <property type="term" value="F:ribosomal large subunit binding"/>
    <property type="evidence" value="ECO:0007669"/>
    <property type="project" value="TreeGrafter"/>
</dbReference>
<dbReference type="GO" id="GO:0006415">
    <property type="term" value="P:translational termination"/>
    <property type="evidence" value="ECO:0007669"/>
    <property type="project" value="UniProtKB-UniRule"/>
</dbReference>
<dbReference type="CDD" id="cd00520">
    <property type="entry name" value="RRF"/>
    <property type="match status" value="1"/>
</dbReference>
<dbReference type="FunFam" id="1.10.132.20:FF:000001">
    <property type="entry name" value="Ribosome-recycling factor"/>
    <property type="match status" value="1"/>
</dbReference>
<dbReference type="FunFam" id="3.30.1360.40:FF:000001">
    <property type="entry name" value="Ribosome-recycling factor"/>
    <property type="match status" value="1"/>
</dbReference>
<dbReference type="Gene3D" id="3.30.1360.40">
    <property type="match status" value="1"/>
</dbReference>
<dbReference type="Gene3D" id="1.10.132.20">
    <property type="entry name" value="Ribosome-recycling factor"/>
    <property type="match status" value="1"/>
</dbReference>
<dbReference type="HAMAP" id="MF_00040">
    <property type="entry name" value="RRF"/>
    <property type="match status" value="1"/>
</dbReference>
<dbReference type="InterPro" id="IPR002661">
    <property type="entry name" value="Ribosome_recyc_fac"/>
</dbReference>
<dbReference type="InterPro" id="IPR023584">
    <property type="entry name" value="Ribosome_recyc_fac_dom"/>
</dbReference>
<dbReference type="InterPro" id="IPR036191">
    <property type="entry name" value="RRF_sf"/>
</dbReference>
<dbReference type="NCBIfam" id="TIGR00496">
    <property type="entry name" value="frr"/>
    <property type="match status" value="1"/>
</dbReference>
<dbReference type="PANTHER" id="PTHR20982:SF3">
    <property type="entry name" value="MITOCHONDRIAL RIBOSOME RECYCLING FACTOR PSEUDO 1"/>
    <property type="match status" value="1"/>
</dbReference>
<dbReference type="PANTHER" id="PTHR20982">
    <property type="entry name" value="RIBOSOME RECYCLING FACTOR"/>
    <property type="match status" value="1"/>
</dbReference>
<dbReference type="Pfam" id="PF01765">
    <property type="entry name" value="RRF"/>
    <property type="match status" value="1"/>
</dbReference>
<dbReference type="SUPFAM" id="SSF55194">
    <property type="entry name" value="Ribosome recycling factor, RRF"/>
    <property type="match status" value="1"/>
</dbReference>
<name>RRF_STRSV</name>
<sequence>MANAIVEKAKERMTHSHQSLAREFGSIRAGRANASLLDRIHVEYYGVETPLNQIASITIPEARVLLVTPFDKSSIKDIERALNASDLGITPASDGSVIRLVIPALTEETRRDLAKEVKKVGENAKVAIRNIRRDAMDEAKKQEKAKEITEDELKTLEKDIQKVTDDAVKHIDEMTANKEKELLEV</sequence>
<feature type="chain" id="PRO_1000003290" description="Ribosome-recycling factor">
    <location>
        <begin position="1"/>
        <end position="185"/>
    </location>
</feature>
<organism>
    <name type="scientific">Streptococcus sanguinis (strain SK36)</name>
    <dbReference type="NCBI Taxonomy" id="388919"/>
    <lineage>
        <taxon>Bacteria</taxon>
        <taxon>Bacillati</taxon>
        <taxon>Bacillota</taxon>
        <taxon>Bacilli</taxon>
        <taxon>Lactobacillales</taxon>
        <taxon>Streptococcaceae</taxon>
        <taxon>Streptococcus</taxon>
    </lineage>
</organism>
<keyword id="KW-0963">Cytoplasm</keyword>
<keyword id="KW-0648">Protein biosynthesis</keyword>
<keyword id="KW-1185">Reference proteome</keyword>
<evidence type="ECO:0000255" key="1">
    <source>
        <dbReference type="HAMAP-Rule" id="MF_00040"/>
    </source>
</evidence>
<accession>A3CPA2</accession>
<reference key="1">
    <citation type="journal article" date="2007" name="J. Bacteriol.">
        <title>Genome of the opportunistic pathogen Streptococcus sanguinis.</title>
        <authorList>
            <person name="Xu P."/>
            <person name="Alves J.M."/>
            <person name="Kitten T."/>
            <person name="Brown A."/>
            <person name="Chen Z."/>
            <person name="Ozaki L.S."/>
            <person name="Manque P."/>
            <person name="Ge X."/>
            <person name="Serrano M.G."/>
            <person name="Puiu D."/>
            <person name="Hendricks S."/>
            <person name="Wang Y."/>
            <person name="Chaplin M.D."/>
            <person name="Akan D."/>
            <person name="Paik S."/>
            <person name="Peterson D.L."/>
            <person name="Macrina F.L."/>
            <person name="Buck G.A."/>
        </authorList>
    </citation>
    <scope>NUCLEOTIDE SEQUENCE [LARGE SCALE GENOMIC DNA]</scope>
    <source>
        <strain>SK36</strain>
    </source>
</reference>
<protein>
    <recommendedName>
        <fullName evidence="1">Ribosome-recycling factor</fullName>
        <shortName evidence="1">RRF</shortName>
    </recommendedName>
    <alternativeName>
        <fullName evidence="1">Ribosome-releasing factor</fullName>
    </alternativeName>
</protein>